<feature type="signal peptide" evidence="1">
    <location>
        <begin position="1"/>
        <end position="25"/>
    </location>
</feature>
<feature type="chain" id="PRO_0000021188" description="Epididymal secretory protein E3-alpha">
    <location>
        <begin position="26"/>
        <end position="147"/>
    </location>
</feature>
<feature type="sequence variant" id="VAR_050968" description="In dbSNP:rs34552133.">
    <original>G</original>
    <variation>C</variation>
    <location>
        <position position="62"/>
    </location>
</feature>
<comment type="function">
    <text>Possible function in sperm maturation.</text>
</comment>
<comment type="interaction">
    <interactant intactId="EBI-17953459">
        <id>Q14507</id>
    </interactant>
    <interactant intactId="EBI-17953245">
        <id>Q6UXG8-3</id>
        <label>BTNL9</label>
    </interactant>
    <organismsDiffer>false</organismsDiffer>
    <experiments>3</experiments>
</comment>
<comment type="subcellular location">
    <subcellularLocation>
        <location evidence="2">Secreted</location>
    </subcellularLocation>
</comment>
<comment type="tissue specificity">
    <text>Epididymis, with predominant expression in the corpus region. Moderately expressed in the vas deferens; only low levels are detectable in the caput and cauda regions.</text>
</comment>
<keyword id="KW-1267">Proteomics identification</keyword>
<keyword id="KW-1185">Reference proteome</keyword>
<keyword id="KW-0964">Secreted</keyword>
<keyword id="KW-0732">Signal</keyword>
<protein>
    <recommendedName>
        <fullName>Epididymal secretory protein E3-alpha</fullName>
    </recommendedName>
    <alternativeName>
        <fullName>Human epididymis-specific protein 3-alpha</fullName>
        <shortName>HE3-alpha</shortName>
    </alternativeName>
</protein>
<proteinExistence type="evidence at protein level"/>
<organism>
    <name type="scientific">Homo sapiens</name>
    <name type="common">Human</name>
    <dbReference type="NCBI Taxonomy" id="9606"/>
    <lineage>
        <taxon>Eukaryota</taxon>
        <taxon>Metazoa</taxon>
        <taxon>Chordata</taxon>
        <taxon>Craniata</taxon>
        <taxon>Vertebrata</taxon>
        <taxon>Euteleostomi</taxon>
        <taxon>Mammalia</taxon>
        <taxon>Eutheria</taxon>
        <taxon>Euarchontoglires</taxon>
        <taxon>Primates</taxon>
        <taxon>Haplorrhini</taxon>
        <taxon>Catarrhini</taxon>
        <taxon>Hominidae</taxon>
        <taxon>Homo</taxon>
    </lineage>
</organism>
<dbReference type="EMBL" id="X76383">
    <property type="protein sequence ID" value="CAA53971.2"/>
    <property type="molecule type" value="mRNA"/>
</dbReference>
<dbReference type="EMBL" id="X76385">
    <property type="status" value="NOT_ANNOTATED_CDS"/>
    <property type="molecule type" value="Genomic_DNA"/>
</dbReference>
<dbReference type="EMBL" id="BC069407">
    <property type="protein sequence ID" value="AAH69407.1"/>
    <property type="molecule type" value="mRNA"/>
</dbReference>
<dbReference type="EMBL" id="BC096698">
    <property type="protein sequence ID" value="AAH96698.1"/>
    <property type="molecule type" value="mRNA"/>
</dbReference>
<dbReference type="EMBL" id="BC096731">
    <property type="protein sequence ID" value="AAH96731.1"/>
    <property type="molecule type" value="mRNA"/>
</dbReference>
<dbReference type="EMBL" id="BC098164">
    <property type="protein sequence ID" value="AAH98164.1"/>
    <property type="molecule type" value="mRNA"/>
</dbReference>
<dbReference type="EMBL" id="BC098356">
    <property type="protein sequence ID" value="AAH98356.1"/>
    <property type="molecule type" value="mRNA"/>
</dbReference>
<dbReference type="EMBL" id="BC106711">
    <property type="protein sequence ID" value="AAI06712.1"/>
    <property type="molecule type" value="mRNA"/>
</dbReference>
<dbReference type="EMBL" id="BC106712">
    <property type="protein sequence ID" value="AAI06713.1"/>
    <property type="molecule type" value="mRNA"/>
</dbReference>
<dbReference type="CCDS" id="CCDS9556.1"/>
<dbReference type="PIR" id="I37455">
    <property type="entry name" value="S42795"/>
</dbReference>
<dbReference type="RefSeq" id="NP_006674.2">
    <property type="nucleotide sequence ID" value="NM_006683.4"/>
</dbReference>
<dbReference type="RefSeq" id="XP_016876423.1">
    <property type="nucleotide sequence ID" value="XM_017020934.3"/>
</dbReference>
<dbReference type="RefSeq" id="XP_054231256.1">
    <property type="nucleotide sequence ID" value="XM_054375281.1"/>
</dbReference>
<dbReference type="SMR" id="Q14507"/>
<dbReference type="BioGRID" id="116084">
    <property type="interactions" value="39"/>
</dbReference>
<dbReference type="FunCoup" id="Q14507">
    <property type="interactions" value="107"/>
</dbReference>
<dbReference type="IntAct" id="Q14507">
    <property type="interactions" value="34"/>
</dbReference>
<dbReference type="STRING" id="9606.ENSP00000315098"/>
<dbReference type="iPTMnet" id="Q14507"/>
<dbReference type="PhosphoSitePlus" id="Q14507"/>
<dbReference type="BioMuta" id="EDDM3A"/>
<dbReference type="DMDM" id="14916983"/>
<dbReference type="MassIVE" id="Q14507"/>
<dbReference type="PaxDb" id="9606-ENSP00000315098"/>
<dbReference type="PeptideAtlas" id="Q14507"/>
<dbReference type="ProteomicsDB" id="60009"/>
<dbReference type="Antibodypedia" id="64052">
    <property type="antibodies" value="15 antibodies from 9 providers"/>
</dbReference>
<dbReference type="DNASU" id="10876"/>
<dbReference type="Ensembl" id="ENST00000326842.3">
    <property type="protein sequence ID" value="ENSP00000315098.2"/>
    <property type="gene ID" value="ENSG00000181562.5"/>
</dbReference>
<dbReference type="GeneID" id="10876"/>
<dbReference type="KEGG" id="hsa:10876"/>
<dbReference type="MANE-Select" id="ENST00000326842.3">
    <property type="protein sequence ID" value="ENSP00000315098.2"/>
    <property type="RefSeq nucleotide sequence ID" value="NM_006683.5"/>
    <property type="RefSeq protein sequence ID" value="NP_006674.2"/>
</dbReference>
<dbReference type="AGR" id="HGNC:16978"/>
<dbReference type="CTD" id="10876"/>
<dbReference type="DisGeNET" id="10876"/>
<dbReference type="GeneCards" id="EDDM3A"/>
<dbReference type="HGNC" id="HGNC:16978">
    <property type="gene designation" value="EDDM3A"/>
</dbReference>
<dbReference type="HPA" id="ENSG00000181562">
    <property type="expression patterns" value="Tissue enriched (epididymis)"/>
</dbReference>
<dbReference type="MIM" id="611580">
    <property type="type" value="gene"/>
</dbReference>
<dbReference type="neXtProt" id="NX_Q14507"/>
<dbReference type="OpenTargets" id="ENSG00000181562"/>
<dbReference type="PharmGKB" id="PA165478869"/>
<dbReference type="VEuPathDB" id="HostDB:ENSG00000181562"/>
<dbReference type="eggNOG" id="ENOG502RWFV">
    <property type="taxonomic scope" value="Eukaryota"/>
</dbReference>
<dbReference type="GeneTree" id="ENSGT00390000004706"/>
<dbReference type="InParanoid" id="Q14507"/>
<dbReference type="OMA" id="VYWREFI"/>
<dbReference type="OrthoDB" id="9443769at2759"/>
<dbReference type="PAN-GO" id="Q14507">
    <property type="GO annotations" value="0 GO annotations based on evolutionary models"/>
</dbReference>
<dbReference type="PhylomeDB" id="Q14507"/>
<dbReference type="TreeFam" id="TF314795"/>
<dbReference type="PathwayCommons" id="Q14507"/>
<dbReference type="SignaLink" id="Q14507"/>
<dbReference type="BioGRID-ORCS" id="10876">
    <property type="hits" value="8 hits in 1137 CRISPR screens"/>
</dbReference>
<dbReference type="GenomeRNAi" id="10876"/>
<dbReference type="Pharos" id="Q14507">
    <property type="development level" value="Tdark"/>
</dbReference>
<dbReference type="PRO" id="PR:Q14507"/>
<dbReference type="Proteomes" id="UP000005640">
    <property type="component" value="Chromosome 14"/>
</dbReference>
<dbReference type="RNAct" id="Q14507">
    <property type="molecule type" value="protein"/>
</dbReference>
<dbReference type="Bgee" id="ENSG00000181562">
    <property type="expression patterns" value="Expressed in corpus epididymis and 20 other cell types or tissues"/>
</dbReference>
<dbReference type="ExpressionAtlas" id="Q14507">
    <property type="expression patterns" value="baseline and differential"/>
</dbReference>
<dbReference type="GO" id="GO:0005615">
    <property type="term" value="C:extracellular space"/>
    <property type="evidence" value="ECO:0000304"/>
    <property type="project" value="ProtInc"/>
</dbReference>
<dbReference type="GO" id="GO:0007321">
    <property type="term" value="P:sperm displacement"/>
    <property type="evidence" value="ECO:0000304"/>
    <property type="project" value="ProtInc"/>
</dbReference>
<dbReference type="FunFam" id="3.10.130.10:FF:000004">
    <property type="entry name" value="Epididymal secretory protein E3-alpha"/>
    <property type="match status" value="1"/>
</dbReference>
<dbReference type="Gene3D" id="3.10.130.10">
    <property type="entry name" value="Ribonuclease A-like domain"/>
    <property type="match status" value="1"/>
</dbReference>
<dbReference type="InterPro" id="IPR042402">
    <property type="entry name" value="EDDM3A/EDDM3B"/>
</dbReference>
<dbReference type="InterPro" id="IPR036816">
    <property type="entry name" value="RNaseA-like_dom_sf"/>
</dbReference>
<dbReference type="InterPro" id="IPR023412">
    <property type="entry name" value="RNaseA_domain"/>
</dbReference>
<dbReference type="PANTHER" id="PTHR16788">
    <property type="entry name" value="EPIDIDYMAL SECRETORY PROTEIN E3 ALPHA"/>
    <property type="match status" value="1"/>
</dbReference>
<dbReference type="PANTHER" id="PTHR16788:SF4">
    <property type="entry name" value="EPIDIDYMAL SECRETORY PROTEIN E3-ALPHA"/>
    <property type="match status" value="1"/>
</dbReference>
<dbReference type="Pfam" id="PF00074">
    <property type="entry name" value="RnaseA"/>
    <property type="match status" value="1"/>
</dbReference>
<dbReference type="SUPFAM" id="SSF54076">
    <property type="entry name" value="RNase A-like"/>
    <property type="match status" value="1"/>
</dbReference>
<reference key="1">
    <citation type="journal article" date="1994" name="Mol. Reprod. Dev.">
        <title>Major human epididymis-specific gene product, HE3, is the first representative of a novel gene family.</title>
        <authorList>
            <person name="Kirchhoff C."/>
            <person name="Pera I."/>
            <person name="Rust W."/>
            <person name="Ivell R."/>
        </authorList>
    </citation>
    <scope>NUCLEOTIDE SEQUENCE [GENOMIC DNA / MRNA]</scope>
    <source>
        <tissue>Epididymis</tissue>
    </source>
</reference>
<reference key="2">
    <citation type="submission" date="2000-11" db="EMBL/GenBank/DDBJ databases">
        <authorList>
            <person name="Kirchhoff C."/>
        </authorList>
    </citation>
    <scope>SEQUENCE REVISION</scope>
</reference>
<reference key="3">
    <citation type="journal article" date="2004" name="Genome Res.">
        <title>The status, quality, and expansion of the NIH full-length cDNA project: the Mammalian Gene Collection (MGC).</title>
        <authorList>
            <consortium name="The MGC Project Team"/>
        </authorList>
    </citation>
    <scope>NUCLEOTIDE SEQUENCE [LARGE SCALE MRNA]</scope>
</reference>
<accession>Q14507</accession>
<accession>Q4KN33</accession>
<gene>
    <name type="primary">EDDM3A</name>
    <name type="synonym">FAM12A</name>
    <name type="synonym">HE3A</name>
</gene>
<evidence type="ECO:0000255" key="1"/>
<evidence type="ECO:0000305" key="2"/>
<name>EP3A_HUMAN</name>
<sequence>MTSSLKIWGILLALLCILCRLCVYSNNIYWREFIKLHYLSPSREFKEYKCDVLMREKEALKGKSFHMFIYSLWFKIQRACINEKGSDRYRNAYVWAPGALKVLECHWEKYNNRYTESRSFSYIEFHCGVDGYVDNIEDLRIIEPISN</sequence>